<accession>P94544</accession>
<accession>Q795X4</accession>
<gene>
    <name type="primary">polX</name>
    <name type="synonym">yshC</name>
    <name type="ordered locus">BSU28590</name>
</gene>
<protein>
    <recommendedName>
        <fullName>DNA polymerase/3'-5' exonuclease PolX</fullName>
    </recommendedName>
    <domain>
        <recommendedName>
            <fullName>DNA polymerase type-X</fullName>
            <ecNumber>2.7.7.7</ecNumber>
        </recommendedName>
    </domain>
    <domain>
        <recommendedName>
            <fullName>3'-5' exodeoxyribonuclease</fullName>
            <shortName>3'-5' exonuclease</shortName>
            <ecNumber>3.1.11.1</ecNumber>
        </recommendedName>
    </domain>
</protein>
<reference key="1">
    <citation type="journal article" date="1996" name="Microbiology">
        <title>The dnaB-pheA (256 degrees-240 degrees) region of the Bacillus subtilis chromosome containing genes responsible for stress responses, the utilization of plant cell walls and primary metabolism.</title>
        <authorList>
            <person name="Wipat A."/>
            <person name="Carter N."/>
            <person name="Brignell C.S."/>
            <person name="Guy J.B."/>
            <person name="Piper K."/>
            <person name="Sanders J."/>
            <person name="Emmerson P.T."/>
            <person name="Harwood C.R."/>
        </authorList>
    </citation>
    <scope>NUCLEOTIDE SEQUENCE [GENOMIC DNA]</scope>
    <source>
        <strain>168</strain>
    </source>
</reference>
<reference key="2">
    <citation type="journal article" date="1997" name="Nature">
        <title>The complete genome sequence of the Gram-positive bacterium Bacillus subtilis.</title>
        <authorList>
            <person name="Kunst F."/>
            <person name="Ogasawara N."/>
            <person name="Moszer I."/>
            <person name="Albertini A.M."/>
            <person name="Alloni G."/>
            <person name="Azevedo V."/>
            <person name="Bertero M.G."/>
            <person name="Bessieres P."/>
            <person name="Bolotin A."/>
            <person name="Borchert S."/>
            <person name="Borriss R."/>
            <person name="Boursier L."/>
            <person name="Brans A."/>
            <person name="Braun M."/>
            <person name="Brignell S.C."/>
            <person name="Bron S."/>
            <person name="Brouillet S."/>
            <person name="Bruschi C.V."/>
            <person name="Caldwell B."/>
            <person name="Capuano V."/>
            <person name="Carter N.M."/>
            <person name="Choi S.-K."/>
            <person name="Codani J.-J."/>
            <person name="Connerton I.F."/>
            <person name="Cummings N.J."/>
            <person name="Daniel R.A."/>
            <person name="Denizot F."/>
            <person name="Devine K.M."/>
            <person name="Duesterhoeft A."/>
            <person name="Ehrlich S.D."/>
            <person name="Emmerson P.T."/>
            <person name="Entian K.-D."/>
            <person name="Errington J."/>
            <person name="Fabret C."/>
            <person name="Ferrari E."/>
            <person name="Foulger D."/>
            <person name="Fritz C."/>
            <person name="Fujita M."/>
            <person name="Fujita Y."/>
            <person name="Fuma S."/>
            <person name="Galizzi A."/>
            <person name="Galleron N."/>
            <person name="Ghim S.-Y."/>
            <person name="Glaser P."/>
            <person name="Goffeau A."/>
            <person name="Golightly E.J."/>
            <person name="Grandi G."/>
            <person name="Guiseppi G."/>
            <person name="Guy B.J."/>
            <person name="Haga K."/>
            <person name="Haiech J."/>
            <person name="Harwood C.R."/>
            <person name="Henaut A."/>
            <person name="Hilbert H."/>
            <person name="Holsappel S."/>
            <person name="Hosono S."/>
            <person name="Hullo M.-F."/>
            <person name="Itaya M."/>
            <person name="Jones L.-M."/>
            <person name="Joris B."/>
            <person name="Karamata D."/>
            <person name="Kasahara Y."/>
            <person name="Klaerr-Blanchard M."/>
            <person name="Klein C."/>
            <person name="Kobayashi Y."/>
            <person name="Koetter P."/>
            <person name="Koningstein G."/>
            <person name="Krogh S."/>
            <person name="Kumano M."/>
            <person name="Kurita K."/>
            <person name="Lapidus A."/>
            <person name="Lardinois S."/>
            <person name="Lauber J."/>
            <person name="Lazarevic V."/>
            <person name="Lee S.-M."/>
            <person name="Levine A."/>
            <person name="Liu H."/>
            <person name="Masuda S."/>
            <person name="Mauel C."/>
            <person name="Medigue C."/>
            <person name="Medina N."/>
            <person name="Mellado R.P."/>
            <person name="Mizuno M."/>
            <person name="Moestl D."/>
            <person name="Nakai S."/>
            <person name="Noback M."/>
            <person name="Noone D."/>
            <person name="O'Reilly M."/>
            <person name="Ogawa K."/>
            <person name="Ogiwara A."/>
            <person name="Oudega B."/>
            <person name="Park S.-H."/>
            <person name="Parro V."/>
            <person name="Pohl T.M."/>
            <person name="Portetelle D."/>
            <person name="Porwollik S."/>
            <person name="Prescott A.M."/>
            <person name="Presecan E."/>
            <person name="Pujic P."/>
            <person name="Purnelle B."/>
            <person name="Rapoport G."/>
            <person name="Rey M."/>
            <person name="Reynolds S."/>
            <person name="Rieger M."/>
            <person name="Rivolta C."/>
            <person name="Rocha E."/>
            <person name="Roche B."/>
            <person name="Rose M."/>
            <person name="Sadaie Y."/>
            <person name="Sato T."/>
            <person name="Scanlan E."/>
            <person name="Schleich S."/>
            <person name="Schroeter R."/>
            <person name="Scoffone F."/>
            <person name="Sekiguchi J."/>
            <person name="Sekowska A."/>
            <person name="Seror S.J."/>
            <person name="Serror P."/>
            <person name="Shin B.-S."/>
            <person name="Soldo B."/>
            <person name="Sorokin A."/>
            <person name="Tacconi E."/>
            <person name="Takagi T."/>
            <person name="Takahashi H."/>
            <person name="Takemaru K."/>
            <person name="Takeuchi M."/>
            <person name="Tamakoshi A."/>
            <person name="Tanaka T."/>
            <person name="Terpstra P."/>
            <person name="Tognoni A."/>
            <person name="Tosato V."/>
            <person name="Uchiyama S."/>
            <person name="Vandenbol M."/>
            <person name="Vannier F."/>
            <person name="Vassarotti A."/>
            <person name="Viari A."/>
            <person name="Wambutt R."/>
            <person name="Wedler E."/>
            <person name="Wedler H."/>
            <person name="Weitzenegger T."/>
            <person name="Winters P."/>
            <person name="Wipat A."/>
            <person name="Yamamoto H."/>
            <person name="Yamane K."/>
            <person name="Yasumoto K."/>
            <person name="Yata K."/>
            <person name="Yoshida K."/>
            <person name="Yoshikawa H.-F."/>
            <person name="Zumstein E."/>
            <person name="Yoshikawa H."/>
            <person name="Danchin A."/>
        </authorList>
    </citation>
    <scope>NUCLEOTIDE SEQUENCE [LARGE SCALE GENOMIC DNA]</scope>
    <source>
        <strain>168</strain>
    </source>
</reference>
<reference key="3">
    <citation type="journal article" date="2008" name="J. Mol. Biol.">
        <title>Characterization of a Bacillus subtilis 64-kDa DNA polymerase X potentially involved in DNA repair.</title>
        <authorList>
            <person name="Banos B."/>
            <person name="Lazaro J.M."/>
            <person name="Villar L."/>
            <person name="Salas M."/>
            <person name="de Vega M."/>
        </authorList>
    </citation>
    <scope>FUNCTION</scope>
    <scope>DNA POLYMERASE ACTIVITY</scope>
    <scope>COFACTOR</scope>
    <scope>SUBUNIT</scope>
    <scope>ACTIVITY REGULATION</scope>
    <scope>MUTAGENESIS OF 193-ASP--ASP-195</scope>
</reference>
<reference key="4">
    <citation type="journal article" date="2008" name="Nucleic Acids Res.">
        <title>Editing of misaligned 3'-termini by an intrinsic 3'-5' exonuclease activity residing in the PHP domain of a family X DNA polymerase.</title>
        <authorList>
            <person name="Banos B."/>
            <person name="Lazaro J.M."/>
            <person name="Villar L."/>
            <person name="Salas M."/>
            <person name="de Vega M."/>
        </authorList>
    </citation>
    <scope>FUNCTION</scope>
    <scope>EXONUCLEASE ACTIVITY</scope>
    <scope>COFACTOR</scope>
    <scope>DOMAIN</scope>
    <scope>MUTAGENESIS OF 339-HIS--HIS-341</scope>
</reference>
<sequence length="570" mass="64120">MHKKDIIRLLETIAVYMELKGDNPFKVSAFRKAAAALEQDDRSLSEMDDMMSLSGIGKGTYSVIKEYIDEGKSSTLESLQKEVPEGLVPLLKLPGLGGKKIAKLYKELGVHDAESLKEACEQQKVQGLAGFGKKSEEKILQALGEAGKQPERFPIGYALRIAREIEEHLSQFTHIIKFSRAGSLRRARETVKDLDYIIATDHPAEVREQLLELPNIKSVIASGDTKVSVILSFEYETSVDFRLVTEEQFPTTLHHFTGSKDHNIKMRQIAKERGERISEYGVETVETGEIKTFPSEREFYAHFGLPLIPPEIRESGQEVETYSDSIELIELGQIKGDLHMHSTWSDGAFSIREMAEACIKKGYQYMAITDHSQYLKVANGLTAERLKQQAKEIDALNAEFENFRILKGVEMDILPDGTLDYDDDVLAEMDIVIASIHSSFNQPEHVIMKRLETALTNKHVDIIAHPTGRLIGRRAGYEIDIDQLIELARKTNTALELNANPARLDLRTEHLMKANEQGVTLVINTDAHNIEMLDDMKTGVTAARKGWTETKNVLNARSLKDVEAFLKRND</sequence>
<dbReference type="EC" id="2.7.7.7"/>
<dbReference type="EC" id="3.1.11.1"/>
<dbReference type="EMBL" id="Z75208">
    <property type="protein sequence ID" value="CAA99568.1"/>
    <property type="molecule type" value="Genomic_DNA"/>
</dbReference>
<dbReference type="EMBL" id="AL009126">
    <property type="protein sequence ID" value="CAB14819.1"/>
    <property type="molecule type" value="Genomic_DNA"/>
</dbReference>
<dbReference type="PIR" id="C69985">
    <property type="entry name" value="C69985"/>
</dbReference>
<dbReference type="RefSeq" id="NP_390737.1">
    <property type="nucleotide sequence ID" value="NC_000964.3"/>
</dbReference>
<dbReference type="RefSeq" id="WP_003229538.1">
    <property type="nucleotide sequence ID" value="NZ_OZ025638.1"/>
</dbReference>
<dbReference type="SMR" id="P94544"/>
<dbReference type="FunCoup" id="P94544">
    <property type="interactions" value="188"/>
</dbReference>
<dbReference type="STRING" id="224308.BSU28590"/>
<dbReference type="PaxDb" id="224308-BSU28590"/>
<dbReference type="DNASU" id="937426"/>
<dbReference type="EnsemblBacteria" id="CAB14819">
    <property type="protein sequence ID" value="CAB14819"/>
    <property type="gene ID" value="BSU_28590"/>
</dbReference>
<dbReference type="GeneID" id="937426"/>
<dbReference type="KEGG" id="bsu:BSU28590"/>
<dbReference type="PATRIC" id="fig|224308.179.peg.3106"/>
<dbReference type="eggNOG" id="COG1387">
    <property type="taxonomic scope" value="Bacteria"/>
</dbReference>
<dbReference type="eggNOG" id="COG1796">
    <property type="taxonomic scope" value="Bacteria"/>
</dbReference>
<dbReference type="InParanoid" id="P94544"/>
<dbReference type="OrthoDB" id="9808747at2"/>
<dbReference type="PhylomeDB" id="P94544"/>
<dbReference type="BioCyc" id="BSUB:BSU28590-MONOMER"/>
<dbReference type="BRENDA" id="2.7.7.7">
    <property type="organism ID" value="658"/>
</dbReference>
<dbReference type="Proteomes" id="UP000001570">
    <property type="component" value="Chromosome"/>
</dbReference>
<dbReference type="GO" id="GO:0003677">
    <property type="term" value="F:DNA binding"/>
    <property type="evidence" value="ECO:0007669"/>
    <property type="project" value="UniProtKB-KW"/>
</dbReference>
<dbReference type="GO" id="GO:0003887">
    <property type="term" value="F:DNA-directed DNA polymerase activity"/>
    <property type="evidence" value="ECO:0000318"/>
    <property type="project" value="GO_Central"/>
</dbReference>
<dbReference type="GO" id="GO:0046872">
    <property type="term" value="F:metal ion binding"/>
    <property type="evidence" value="ECO:0007669"/>
    <property type="project" value="UniProtKB-KW"/>
</dbReference>
<dbReference type="GO" id="GO:0008310">
    <property type="term" value="F:single-stranded DNA 3'-5' DNA exonuclease activity"/>
    <property type="evidence" value="ECO:0007669"/>
    <property type="project" value="UniProtKB-EC"/>
</dbReference>
<dbReference type="GO" id="GO:0006281">
    <property type="term" value="P:DNA repair"/>
    <property type="evidence" value="ECO:0007669"/>
    <property type="project" value="UniProtKB-KW"/>
</dbReference>
<dbReference type="GO" id="GO:0006260">
    <property type="term" value="P:DNA replication"/>
    <property type="evidence" value="ECO:0007669"/>
    <property type="project" value="UniProtKB-KW"/>
</dbReference>
<dbReference type="CDD" id="cd00141">
    <property type="entry name" value="NT_POLXc"/>
    <property type="match status" value="1"/>
</dbReference>
<dbReference type="CDD" id="cd07436">
    <property type="entry name" value="PHP_PolX"/>
    <property type="match status" value="1"/>
</dbReference>
<dbReference type="FunFam" id="3.20.20.140:FF:000047">
    <property type="entry name" value="PHP domain-containing protein"/>
    <property type="match status" value="1"/>
</dbReference>
<dbReference type="Gene3D" id="1.10.150.20">
    <property type="entry name" value="5' to 3' exonuclease, C-terminal subdomain"/>
    <property type="match status" value="1"/>
</dbReference>
<dbReference type="Gene3D" id="3.30.460.10">
    <property type="entry name" value="Beta Polymerase, domain 2"/>
    <property type="match status" value="1"/>
</dbReference>
<dbReference type="Gene3D" id="1.10.150.110">
    <property type="entry name" value="DNA polymerase beta, N-terminal domain-like"/>
    <property type="match status" value="1"/>
</dbReference>
<dbReference type="Gene3D" id="3.30.210.10">
    <property type="entry name" value="DNA polymerase, thumb domain"/>
    <property type="match status" value="1"/>
</dbReference>
<dbReference type="Gene3D" id="3.20.20.140">
    <property type="entry name" value="Metal-dependent hydrolases"/>
    <property type="match status" value="1"/>
</dbReference>
<dbReference type="InterPro" id="IPR002054">
    <property type="entry name" value="DNA-dir_DNA_pol_X"/>
</dbReference>
<dbReference type="InterPro" id="IPR010996">
    <property type="entry name" value="DNA_pol_b-like_N"/>
</dbReference>
<dbReference type="InterPro" id="IPR027421">
    <property type="entry name" value="DNA_pol_lamdba_lyase_dom_sf"/>
</dbReference>
<dbReference type="InterPro" id="IPR037160">
    <property type="entry name" value="DNA_Pol_thumb_sf"/>
</dbReference>
<dbReference type="InterPro" id="IPR003583">
    <property type="entry name" value="Hlx-hairpin-Hlx_DNA-bd_motif"/>
</dbReference>
<dbReference type="InterPro" id="IPR043519">
    <property type="entry name" value="NT_sf"/>
</dbReference>
<dbReference type="InterPro" id="IPR004013">
    <property type="entry name" value="PHP_dom"/>
</dbReference>
<dbReference type="InterPro" id="IPR050243">
    <property type="entry name" value="PHP_phosphatase"/>
</dbReference>
<dbReference type="InterPro" id="IPR003141">
    <property type="entry name" value="Pol/His_phosphatase_N"/>
</dbReference>
<dbReference type="InterPro" id="IPR016195">
    <property type="entry name" value="Pol/histidinol_Pase-like"/>
</dbReference>
<dbReference type="InterPro" id="IPR029398">
    <property type="entry name" value="PolB_thumb"/>
</dbReference>
<dbReference type="InterPro" id="IPR022311">
    <property type="entry name" value="PolX-like"/>
</dbReference>
<dbReference type="InterPro" id="IPR047967">
    <property type="entry name" value="PolX_PHP"/>
</dbReference>
<dbReference type="NCBIfam" id="NF006375">
    <property type="entry name" value="PRK08609.1"/>
    <property type="match status" value="1"/>
</dbReference>
<dbReference type="PANTHER" id="PTHR36928">
    <property type="entry name" value="PHOSPHATASE YCDX-RELATED"/>
    <property type="match status" value="1"/>
</dbReference>
<dbReference type="PANTHER" id="PTHR36928:SF1">
    <property type="entry name" value="PHOSPHATASE YCDX-RELATED"/>
    <property type="match status" value="1"/>
</dbReference>
<dbReference type="Pfam" id="PF14791">
    <property type="entry name" value="DNA_pol_B_thumb"/>
    <property type="match status" value="1"/>
</dbReference>
<dbReference type="Pfam" id="PF14520">
    <property type="entry name" value="HHH_5"/>
    <property type="match status" value="1"/>
</dbReference>
<dbReference type="Pfam" id="PF14716">
    <property type="entry name" value="HHH_8"/>
    <property type="match status" value="1"/>
</dbReference>
<dbReference type="Pfam" id="PF02811">
    <property type="entry name" value="PHP"/>
    <property type="match status" value="1"/>
</dbReference>
<dbReference type="PIRSF" id="PIRSF005047">
    <property type="entry name" value="UCP005047_YshC"/>
    <property type="match status" value="1"/>
</dbReference>
<dbReference type="SMART" id="SM00278">
    <property type="entry name" value="HhH1"/>
    <property type="match status" value="3"/>
</dbReference>
<dbReference type="SMART" id="SM00481">
    <property type="entry name" value="POLIIIAc"/>
    <property type="match status" value="1"/>
</dbReference>
<dbReference type="SMART" id="SM00483">
    <property type="entry name" value="POLXc"/>
    <property type="match status" value="1"/>
</dbReference>
<dbReference type="SUPFAM" id="SSF47802">
    <property type="entry name" value="DNA polymerase beta, N-terminal domain-like"/>
    <property type="match status" value="1"/>
</dbReference>
<dbReference type="SUPFAM" id="SSF81301">
    <property type="entry name" value="Nucleotidyltransferase"/>
    <property type="match status" value="1"/>
</dbReference>
<dbReference type="SUPFAM" id="SSF89550">
    <property type="entry name" value="PHP domain-like"/>
    <property type="match status" value="1"/>
</dbReference>
<comment type="function">
    <text evidence="2 3">Strictly DNA-template-directed DNA polymerase, preferentially acting on DNA structures containing gaps from one to a few nucleotides and bearing a phosphate group at the 5' end of the downstream DNA. The fact that PolX is able to conduct filling of a single-nucleotide gap, allowing further sealing of the resulting nick by a DNA ligase, points to a putative role in base excision repair (BER) during the B.subtilis life cycle. Moreover, also possesses a 3'-5' exonuclease activity able to edit unpaired 3'-termini in a gapped DNA substrate and likely involved in resecting unannealed 3'-termini during DNA repair. The same PolX molecule could perform the subsequent gap-filling step. Does not display 5'-deoxyribose 5'-phosphate (dRP) lyase activity, as predicted by the lack of the lysine and tyrosine residues responsible for the dRP lyase activity in some other PolX members.</text>
</comment>
<comment type="catalytic activity">
    <reaction>
        <text>DNA(n) + a 2'-deoxyribonucleoside 5'-triphosphate = DNA(n+1) + diphosphate</text>
        <dbReference type="Rhea" id="RHEA:22508"/>
        <dbReference type="Rhea" id="RHEA-COMP:17339"/>
        <dbReference type="Rhea" id="RHEA-COMP:17340"/>
        <dbReference type="ChEBI" id="CHEBI:33019"/>
        <dbReference type="ChEBI" id="CHEBI:61560"/>
        <dbReference type="ChEBI" id="CHEBI:173112"/>
        <dbReference type="EC" id="2.7.7.7"/>
    </reaction>
</comment>
<comment type="catalytic activity">
    <reaction>
        <text>Exonucleolytic cleavage in the 3'- to 5'-direction to yield nucleoside 5'-phosphates.</text>
        <dbReference type="EC" id="3.1.11.1"/>
    </reaction>
</comment>
<comment type="cofactor">
    <cofactor evidence="4">
        <name>Mn(2+)</name>
        <dbReference type="ChEBI" id="CHEBI:29035"/>
    </cofactor>
    <cofactor evidence="4">
        <name>Mg(2+)</name>
        <dbReference type="ChEBI" id="CHEBI:18420"/>
    </cofactor>
    <text evidence="4">Probably binds 2 divalent metal cations per N-terminal polymerase domain. Mn(2+) is more effective than Mg(2+) for DNA polymerase activity.</text>
</comment>
<comment type="cofactor">
    <cofactor evidence="4">
        <name>Mn(2+)</name>
        <dbReference type="ChEBI" id="CHEBI:29035"/>
    </cofactor>
    <text evidence="4">Probably binds 3 Mn(2+) ions per C-terminal exonuclease domain. Mg(2+) cannot replace Mn(2+) for 3'-5' exonuclease activity.</text>
</comment>
<comment type="activity regulation">
    <text evidence="3">The polymerization activity is inhibited in the presence of 2'-3'-dideoxynucleoside 5'-triphosphate (ddNTP).</text>
</comment>
<comment type="subunit">
    <text evidence="3">Monomer.</text>
</comment>
<comment type="domain">
    <text evidence="2">The 3'-5' exonuclease activity resides in the C-terminal PHP domain.</text>
</comment>
<comment type="similarity">
    <text evidence="4">In the N-terminal section; belongs to the DNA polymerase type-X family.</text>
</comment>
<comment type="similarity">
    <text evidence="4">In the C-terminal section; belongs to the PHP family.</text>
</comment>
<proteinExistence type="evidence at protein level"/>
<name>POLX_BACSU</name>
<evidence type="ECO:0000250" key="1"/>
<evidence type="ECO:0000269" key="2">
    <source>
    </source>
</evidence>
<evidence type="ECO:0000269" key="3">
    <source>
    </source>
</evidence>
<evidence type="ECO:0000305" key="4"/>
<keyword id="KW-0227">DNA damage</keyword>
<keyword id="KW-0234">DNA repair</keyword>
<keyword id="KW-0235">DNA replication</keyword>
<keyword id="KW-0237">DNA synthesis</keyword>
<keyword id="KW-0238">DNA-binding</keyword>
<keyword id="KW-0239">DNA-directed DNA polymerase</keyword>
<keyword id="KW-0378">Hydrolase</keyword>
<keyword id="KW-0460">Magnesium</keyword>
<keyword id="KW-0464">Manganese</keyword>
<keyword id="KW-0479">Metal-binding</keyword>
<keyword id="KW-0511">Multifunctional enzyme</keyword>
<keyword id="KW-0548">Nucleotidyltransferase</keyword>
<keyword id="KW-1185">Reference proteome</keyword>
<keyword id="KW-0808">Transferase</keyword>
<feature type="chain" id="PRO_0000360771" description="DNA polymerase/3'-5' exonuclease PolX">
    <location>
        <begin position="1"/>
        <end position="570"/>
    </location>
</feature>
<feature type="region of interest" description="DNA polymerase type-X">
    <location>
        <begin position="1"/>
        <end position="315"/>
    </location>
</feature>
<feature type="region of interest" description="3'-5' exonuclease">
    <location>
        <begin position="333"/>
        <end position="570"/>
    </location>
</feature>
<feature type="binding site" evidence="4">
    <location>
        <position position="193"/>
    </location>
    <ligand>
        <name>a divalent metal cation</name>
        <dbReference type="ChEBI" id="CHEBI:60240"/>
        <label>1</label>
    </ligand>
</feature>
<feature type="binding site" evidence="4">
    <location>
        <position position="193"/>
    </location>
    <ligand>
        <name>a divalent metal cation</name>
        <dbReference type="ChEBI" id="CHEBI:60240"/>
        <label>2</label>
    </ligand>
</feature>
<feature type="binding site" evidence="4">
    <location>
        <position position="195"/>
    </location>
    <ligand>
        <name>a divalent metal cation</name>
        <dbReference type="ChEBI" id="CHEBI:60240"/>
        <label>1</label>
    </ligand>
</feature>
<feature type="binding site" evidence="4">
    <location>
        <position position="195"/>
    </location>
    <ligand>
        <name>a divalent metal cation</name>
        <dbReference type="ChEBI" id="CHEBI:60240"/>
        <label>2</label>
    </ligand>
</feature>
<feature type="binding site" evidence="1">
    <location>
        <position position="240"/>
    </location>
    <ligand>
        <name>a divalent metal cation</name>
        <dbReference type="ChEBI" id="CHEBI:60240"/>
        <label>2</label>
    </ligand>
</feature>
<feature type="binding site" evidence="4">
    <location>
        <position position="339"/>
    </location>
    <ligand>
        <name>Mn(2+)</name>
        <dbReference type="ChEBI" id="CHEBI:29035"/>
        <label>1</label>
    </ligand>
</feature>
<feature type="binding site" evidence="4">
    <location>
        <position position="341"/>
    </location>
    <ligand>
        <name>Mn(2+)</name>
        <dbReference type="ChEBI" id="CHEBI:29035"/>
        <label>1</label>
    </ligand>
</feature>
<feature type="binding site" evidence="1">
    <location>
        <position position="371"/>
    </location>
    <ligand>
        <name>Mn(2+)</name>
        <dbReference type="ChEBI" id="CHEBI:29035"/>
        <label>2</label>
    </ligand>
</feature>
<feature type="binding site" evidence="1">
    <location>
        <position position="410"/>
    </location>
    <ligand>
        <name>Mn(2+)</name>
        <dbReference type="ChEBI" id="CHEBI:29035"/>
        <label>1</label>
    </ligand>
</feature>
<feature type="binding site" evidence="1">
    <location>
        <position position="410"/>
    </location>
    <ligand>
        <name>Mn(2+)</name>
        <dbReference type="ChEBI" id="CHEBI:29035"/>
        <label>3</label>
    </ligand>
</feature>
<feature type="binding site" evidence="1">
    <location>
        <position position="437"/>
    </location>
    <ligand>
        <name>Mn(2+)</name>
        <dbReference type="ChEBI" id="CHEBI:29035"/>
        <label>3</label>
    </ligand>
</feature>
<feature type="binding site" evidence="1">
    <location>
        <position position="465"/>
    </location>
    <ligand>
        <name>Mn(2+)</name>
        <dbReference type="ChEBI" id="CHEBI:29035"/>
        <label>3</label>
    </ligand>
</feature>
<feature type="binding site" evidence="1">
    <location>
        <position position="526"/>
    </location>
    <ligand>
        <name>Mn(2+)</name>
        <dbReference type="ChEBI" id="CHEBI:29035"/>
        <label>1</label>
    </ligand>
</feature>
<feature type="binding site" evidence="1">
    <location>
        <position position="528"/>
    </location>
    <ligand>
        <name>Mn(2+)</name>
        <dbReference type="ChEBI" id="CHEBI:29035"/>
        <label>2</label>
    </ligand>
</feature>
<feature type="mutagenesis site" description="Abolishes DNA polymerase activity." evidence="3">
    <original>DLD</original>
    <variation>ALA</variation>
    <location>
        <begin position="193"/>
        <end position="195"/>
    </location>
</feature>
<feature type="mutagenesis site" description="Abolishes 3'-5' exonuclease activity. Still possesses DNA polymerase activity." evidence="2">
    <original>HMH</original>
    <variation>AMA</variation>
    <location>
        <begin position="339"/>
        <end position="341"/>
    </location>
</feature>
<organism>
    <name type="scientific">Bacillus subtilis (strain 168)</name>
    <dbReference type="NCBI Taxonomy" id="224308"/>
    <lineage>
        <taxon>Bacteria</taxon>
        <taxon>Bacillati</taxon>
        <taxon>Bacillota</taxon>
        <taxon>Bacilli</taxon>
        <taxon>Bacillales</taxon>
        <taxon>Bacillaceae</taxon>
        <taxon>Bacillus</taxon>
    </lineage>
</organism>